<reference key="1">
    <citation type="submission" date="2007-06" db="EMBL/GenBank/DDBJ databases">
        <title>Complete sequence of Marinomonas sp. MWYL1.</title>
        <authorList>
            <consortium name="US DOE Joint Genome Institute"/>
            <person name="Copeland A."/>
            <person name="Lucas S."/>
            <person name="Lapidus A."/>
            <person name="Barry K."/>
            <person name="Glavina del Rio T."/>
            <person name="Dalin E."/>
            <person name="Tice H."/>
            <person name="Pitluck S."/>
            <person name="Kiss H."/>
            <person name="Brettin T."/>
            <person name="Bruce D."/>
            <person name="Detter J.C."/>
            <person name="Han C."/>
            <person name="Schmutz J."/>
            <person name="Larimer F."/>
            <person name="Land M."/>
            <person name="Hauser L."/>
            <person name="Kyrpides N."/>
            <person name="Kim E."/>
            <person name="Johnston A.W.B."/>
            <person name="Todd J.D."/>
            <person name="Rogers R."/>
            <person name="Wexler M."/>
            <person name="Bond P.L."/>
            <person name="Li Y."/>
            <person name="Richardson P."/>
        </authorList>
    </citation>
    <scope>NUCLEOTIDE SEQUENCE [LARGE SCALE GENOMIC DNA]</scope>
    <source>
        <strain>MWYL1</strain>
    </source>
</reference>
<proteinExistence type="inferred from homology"/>
<gene>
    <name evidence="1" type="primary">lpxD</name>
    <name type="ordered locus">Mmwyl1_1282</name>
</gene>
<evidence type="ECO:0000255" key="1">
    <source>
        <dbReference type="HAMAP-Rule" id="MF_00523"/>
    </source>
</evidence>
<organism>
    <name type="scientific">Marinomonas sp. (strain MWYL1)</name>
    <dbReference type="NCBI Taxonomy" id="400668"/>
    <lineage>
        <taxon>Bacteria</taxon>
        <taxon>Pseudomonadati</taxon>
        <taxon>Pseudomonadota</taxon>
        <taxon>Gammaproteobacteria</taxon>
        <taxon>Oceanospirillales</taxon>
        <taxon>Oceanospirillaceae</taxon>
        <taxon>Marinomonas</taxon>
    </lineage>
</organism>
<dbReference type="EC" id="2.3.1.191" evidence="1"/>
<dbReference type="EMBL" id="CP000749">
    <property type="protein sequence ID" value="ABR70211.1"/>
    <property type="molecule type" value="Genomic_DNA"/>
</dbReference>
<dbReference type="SMR" id="A6VUT2"/>
<dbReference type="STRING" id="400668.Mmwyl1_1282"/>
<dbReference type="KEGG" id="mmw:Mmwyl1_1282"/>
<dbReference type="eggNOG" id="COG1044">
    <property type="taxonomic scope" value="Bacteria"/>
</dbReference>
<dbReference type="HOGENOM" id="CLU_049865_0_1_6"/>
<dbReference type="OrthoDB" id="9784739at2"/>
<dbReference type="UniPathway" id="UPA00973"/>
<dbReference type="GO" id="GO:0016020">
    <property type="term" value="C:membrane"/>
    <property type="evidence" value="ECO:0007669"/>
    <property type="project" value="GOC"/>
</dbReference>
<dbReference type="GO" id="GO:0016410">
    <property type="term" value="F:N-acyltransferase activity"/>
    <property type="evidence" value="ECO:0007669"/>
    <property type="project" value="InterPro"/>
</dbReference>
<dbReference type="GO" id="GO:0009245">
    <property type="term" value="P:lipid A biosynthetic process"/>
    <property type="evidence" value="ECO:0007669"/>
    <property type="project" value="UniProtKB-UniRule"/>
</dbReference>
<dbReference type="CDD" id="cd03352">
    <property type="entry name" value="LbH_LpxD"/>
    <property type="match status" value="1"/>
</dbReference>
<dbReference type="Gene3D" id="1.20.5.170">
    <property type="match status" value="1"/>
</dbReference>
<dbReference type="Gene3D" id="2.160.10.10">
    <property type="entry name" value="Hexapeptide repeat proteins"/>
    <property type="match status" value="1"/>
</dbReference>
<dbReference type="Gene3D" id="3.40.1390.10">
    <property type="entry name" value="MurE/MurF, N-terminal domain"/>
    <property type="match status" value="1"/>
</dbReference>
<dbReference type="HAMAP" id="MF_00523">
    <property type="entry name" value="LpxD"/>
    <property type="match status" value="1"/>
</dbReference>
<dbReference type="InterPro" id="IPR001451">
    <property type="entry name" value="Hexapep"/>
</dbReference>
<dbReference type="InterPro" id="IPR018357">
    <property type="entry name" value="Hexapep_transf_CS"/>
</dbReference>
<dbReference type="InterPro" id="IPR007691">
    <property type="entry name" value="LpxD"/>
</dbReference>
<dbReference type="InterPro" id="IPR011004">
    <property type="entry name" value="Trimer_LpxA-like_sf"/>
</dbReference>
<dbReference type="InterPro" id="IPR020573">
    <property type="entry name" value="UDP_GlcNAc_AcTrfase_non-rep"/>
</dbReference>
<dbReference type="NCBIfam" id="TIGR01853">
    <property type="entry name" value="lipid_A_lpxD"/>
    <property type="match status" value="1"/>
</dbReference>
<dbReference type="NCBIfam" id="NF002060">
    <property type="entry name" value="PRK00892.1"/>
    <property type="match status" value="1"/>
</dbReference>
<dbReference type="PANTHER" id="PTHR43378">
    <property type="entry name" value="UDP-3-O-ACYLGLUCOSAMINE N-ACYLTRANSFERASE"/>
    <property type="match status" value="1"/>
</dbReference>
<dbReference type="PANTHER" id="PTHR43378:SF2">
    <property type="entry name" value="UDP-3-O-ACYLGLUCOSAMINE N-ACYLTRANSFERASE 1, MITOCHONDRIAL-RELATED"/>
    <property type="match status" value="1"/>
</dbReference>
<dbReference type="Pfam" id="PF00132">
    <property type="entry name" value="Hexapep"/>
    <property type="match status" value="3"/>
</dbReference>
<dbReference type="Pfam" id="PF04613">
    <property type="entry name" value="LpxD"/>
    <property type="match status" value="1"/>
</dbReference>
<dbReference type="SUPFAM" id="SSF51161">
    <property type="entry name" value="Trimeric LpxA-like enzymes"/>
    <property type="match status" value="1"/>
</dbReference>
<dbReference type="PROSITE" id="PS00101">
    <property type="entry name" value="HEXAPEP_TRANSFERASES"/>
    <property type="match status" value="2"/>
</dbReference>
<keyword id="KW-0012">Acyltransferase</keyword>
<keyword id="KW-0441">Lipid A biosynthesis</keyword>
<keyword id="KW-0444">Lipid biosynthesis</keyword>
<keyword id="KW-0443">Lipid metabolism</keyword>
<keyword id="KW-0677">Repeat</keyword>
<keyword id="KW-0808">Transferase</keyword>
<protein>
    <recommendedName>
        <fullName evidence="1">UDP-3-O-acylglucosamine N-acyltransferase</fullName>
        <ecNumber evidence="1">2.3.1.191</ecNumber>
    </recommendedName>
</protein>
<accession>A6VUT2</accession>
<name>LPXD_MARMS</name>
<sequence>MSYTLGQLAAKVQGVVKGDADLVIDKLGSLENATSKELSFLANSKYQSLLGTTSAGAVLVKTDELAQLVDNAIVVSNPYLAFAQISHLFVPTTHSWSGIHQSAVVSPKATIAENVVVGPNAVIDDDVLIAEDCVIGAGSVLSRGVKIGKGSRIYSNVTLYHDVEVGEACIIHSGTVIGADGFGFAPNDGFWEKIDQLGSVIIGNNVEIGANSTIDRGAIENTQIGNGVKIDNQVQIAHNVVIGDNTAIAGCVGIAGSVKIGASCTISGGAGIAGHLSIVDHTHITGMTMITKSIDEAGSYSSGMGMEPTGKWRRTAARIRRIDEMAKQISSLGQQIKKLSDKG</sequence>
<comment type="function">
    <text evidence="1">Catalyzes the N-acylation of UDP-3-O-acylglucosamine using 3-hydroxyacyl-ACP as the acyl donor. Is involved in the biosynthesis of lipid A, a phosphorylated glycolipid that anchors the lipopolysaccharide to the outer membrane of the cell.</text>
</comment>
<comment type="catalytic activity">
    <reaction evidence="1">
        <text>a UDP-3-O-[(3R)-3-hydroxyacyl]-alpha-D-glucosamine + a (3R)-hydroxyacyl-[ACP] = a UDP-2-N,3-O-bis[(3R)-3-hydroxyacyl]-alpha-D-glucosamine + holo-[ACP] + H(+)</text>
        <dbReference type="Rhea" id="RHEA:53836"/>
        <dbReference type="Rhea" id="RHEA-COMP:9685"/>
        <dbReference type="Rhea" id="RHEA-COMP:9945"/>
        <dbReference type="ChEBI" id="CHEBI:15378"/>
        <dbReference type="ChEBI" id="CHEBI:64479"/>
        <dbReference type="ChEBI" id="CHEBI:78827"/>
        <dbReference type="ChEBI" id="CHEBI:137740"/>
        <dbReference type="ChEBI" id="CHEBI:137748"/>
        <dbReference type="EC" id="2.3.1.191"/>
    </reaction>
</comment>
<comment type="pathway">
    <text evidence="1">Bacterial outer membrane biogenesis; LPS lipid A biosynthesis.</text>
</comment>
<comment type="subunit">
    <text evidence="1">Homotrimer.</text>
</comment>
<comment type="similarity">
    <text evidence="1">Belongs to the transferase hexapeptide repeat family. LpxD subfamily.</text>
</comment>
<feature type="chain" id="PRO_1000127682" description="UDP-3-O-acylglucosamine N-acyltransferase">
    <location>
        <begin position="1"/>
        <end position="343"/>
    </location>
</feature>
<feature type="active site" description="Proton acceptor" evidence="1">
    <location>
        <position position="238"/>
    </location>
</feature>